<reference key="1">
    <citation type="journal article" date="2008" name="BMC Genomics">
        <title>Genomics of an extreme psychrophile, Psychromonas ingrahamii.</title>
        <authorList>
            <person name="Riley M."/>
            <person name="Staley J.T."/>
            <person name="Danchin A."/>
            <person name="Wang T.Z."/>
            <person name="Brettin T.S."/>
            <person name="Hauser L.J."/>
            <person name="Land M.L."/>
            <person name="Thompson L.S."/>
        </authorList>
    </citation>
    <scope>NUCLEOTIDE SEQUENCE [LARGE SCALE GENOMIC DNA]</scope>
    <source>
        <strain>DSM 17664 / CCUG 51855 / 37</strain>
    </source>
</reference>
<dbReference type="EMBL" id="CP000510">
    <property type="protein sequence ID" value="ABM05196.1"/>
    <property type="molecule type" value="Genomic_DNA"/>
</dbReference>
<dbReference type="RefSeq" id="WP_011771744.1">
    <property type="nucleotide sequence ID" value="NC_008709.1"/>
</dbReference>
<dbReference type="SMR" id="A1T0D1"/>
<dbReference type="STRING" id="357804.Ping_3513"/>
<dbReference type="KEGG" id="pin:Ping_3513"/>
<dbReference type="eggNOG" id="COG0198">
    <property type="taxonomic scope" value="Bacteria"/>
</dbReference>
<dbReference type="HOGENOM" id="CLU_093315_2_2_6"/>
<dbReference type="OrthoDB" id="9807419at2"/>
<dbReference type="Proteomes" id="UP000000639">
    <property type="component" value="Chromosome"/>
</dbReference>
<dbReference type="GO" id="GO:1990904">
    <property type="term" value="C:ribonucleoprotein complex"/>
    <property type="evidence" value="ECO:0007669"/>
    <property type="project" value="UniProtKB-KW"/>
</dbReference>
<dbReference type="GO" id="GO:0005840">
    <property type="term" value="C:ribosome"/>
    <property type="evidence" value="ECO:0007669"/>
    <property type="project" value="UniProtKB-KW"/>
</dbReference>
<dbReference type="GO" id="GO:0019843">
    <property type="term" value="F:rRNA binding"/>
    <property type="evidence" value="ECO:0007669"/>
    <property type="project" value="UniProtKB-UniRule"/>
</dbReference>
<dbReference type="GO" id="GO:0003735">
    <property type="term" value="F:structural constituent of ribosome"/>
    <property type="evidence" value="ECO:0007669"/>
    <property type="project" value="InterPro"/>
</dbReference>
<dbReference type="GO" id="GO:0006412">
    <property type="term" value="P:translation"/>
    <property type="evidence" value="ECO:0007669"/>
    <property type="project" value="UniProtKB-UniRule"/>
</dbReference>
<dbReference type="CDD" id="cd06089">
    <property type="entry name" value="KOW_RPL26"/>
    <property type="match status" value="1"/>
</dbReference>
<dbReference type="FunFam" id="2.30.30.30:FF:000004">
    <property type="entry name" value="50S ribosomal protein L24"/>
    <property type="match status" value="1"/>
</dbReference>
<dbReference type="Gene3D" id="2.30.30.30">
    <property type="match status" value="1"/>
</dbReference>
<dbReference type="HAMAP" id="MF_01326_B">
    <property type="entry name" value="Ribosomal_uL24_B"/>
    <property type="match status" value="1"/>
</dbReference>
<dbReference type="InterPro" id="IPR005824">
    <property type="entry name" value="KOW"/>
</dbReference>
<dbReference type="InterPro" id="IPR014722">
    <property type="entry name" value="Rib_uL2_dom2"/>
</dbReference>
<dbReference type="InterPro" id="IPR003256">
    <property type="entry name" value="Ribosomal_uL24"/>
</dbReference>
<dbReference type="InterPro" id="IPR005825">
    <property type="entry name" value="Ribosomal_uL24_CS"/>
</dbReference>
<dbReference type="InterPro" id="IPR041988">
    <property type="entry name" value="Ribosomal_uL24_KOW"/>
</dbReference>
<dbReference type="InterPro" id="IPR008991">
    <property type="entry name" value="Translation_prot_SH3-like_sf"/>
</dbReference>
<dbReference type="NCBIfam" id="TIGR01079">
    <property type="entry name" value="rplX_bact"/>
    <property type="match status" value="1"/>
</dbReference>
<dbReference type="PANTHER" id="PTHR12903">
    <property type="entry name" value="MITOCHONDRIAL RIBOSOMAL PROTEIN L24"/>
    <property type="match status" value="1"/>
</dbReference>
<dbReference type="Pfam" id="PF00467">
    <property type="entry name" value="KOW"/>
    <property type="match status" value="1"/>
</dbReference>
<dbReference type="Pfam" id="PF17136">
    <property type="entry name" value="ribosomal_L24"/>
    <property type="match status" value="1"/>
</dbReference>
<dbReference type="SMART" id="SM00739">
    <property type="entry name" value="KOW"/>
    <property type="match status" value="1"/>
</dbReference>
<dbReference type="SUPFAM" id="SSF50104">
    <property type="entry name" value="Translation proteins SH3-like domain"/>
    <property type="match status" value="1"/>
</dbReference>
<dbReference type="PROSITE" id="PS01108">
    <property type="entry name" value="RIBOSOMAL_L24"/>
    <property type="match status" value="1"/>
</dbReference>
<protein>
    <recommendedName>
        <fullName evidence="1">Large ribosomal subunit protein uL24</fullName>
    </recommendedName>
    <alternativeName>
        <fullName evidence="2">50S ribosomal protein L24</fullName>
    </alternativeName>
</protein>
<sequence length="104" mass="11242">MAVKIKRDDQVIVITGKDKGKTGTIKTVLSNGKIIIEGVNTVKKHQKPNPQADVAGGIIEQSAPMQISNVAILNSATGKADRVGFRLEDGKKVRFFKSNNELVK</sequence>
<gene>
    <name evidence="1" type="primary">rplX</name>
    <name type="ordered locus">Ping_3513</name>
</gene>
<feature type="chain" id="PRO_1000052283" description="Large ribosomal subunit protein uL24">
    <location>
        <begin position="1"/>
        <end position="104"/>
    </location>
</feature>
<proteinExistence type="inferred from homology"/>
<comment type="function">
    <text evidence="1">One of two assembly initiator proteins, it binds directly to the 5'-end of the 23S rRNA, where it nucleates assembly of the 50S subunit.</text>
</comment>
<comment type="function">
    <text evidence="1">One of the proteins that surrounds the polypeptide exit tunnel on the outside of the subunit.</text>
</comment>
<comment type="subunit">
    <text evidence="1">Part of the 50S ribosomal subunit.</text>
</comment>
<comment type="similarity">
    <text evidence="1">Belongs to the universal ribosomal protein uL24 family.</text>
</comment>
<keyword id="KW-1185">Reference proteome</keyword>
<keyword id="KW-0687">Ribonucleoprotein</keyword>
<keyword id="KW-0689">Ribosomal protein</keyword>
<keyword id="KW-0694">RNA-binding</keyword>
<keyword id="KW-0699">rRNA-binding</keyword>
<evidence type="ECO:0000255" key="1">
    <source>
        <dbReference type="HAMAP-Rule" id="MF_01326"/>
    </source>
</evidence>
<evidence type="ECO:0000305" key="2"/>
<accession>A1T0D1</accession>
<name>RL24_PSYIN</name>
<organism>
    <name type="scientific">Psychromonas ingrahamii (strain DSM 17664 / CCUG 51855 / 37)</name>
    <dbReference type="NCBI Taxonomy" id="357804"/>
    <lineage>
        <taxon>Bacteria</taxon>
        <taxon>Pseudomonadati</taxon>
        <taxon>Pseudomonadota</taxon>
        <taxon>Gammaproteobacteria</taxon>
        <taxon>Alteromonadales</taxon>
        <taxon>Psychromonadaceae</taxon>
        <taxon>Psychromonas</taxon>
    </lineage>
</organism>